<sequence>MTLLKEFFIVGAGGFVGSVMRYLMAVVLASASLKHGFPYATLAVNVLGSFMIGFLSQPFSANPYGRLFVMVGVLGGFTTFSTFSNETLLLYNNGQFIFASLNVLLNVLLCLVGVFCGFEAAKIIL</sequence>
<organism>
    <name type="scientific">Elusimicrobium minutum (strain Pei191)</name>
    <dbReference type="NCBI Taxonomy" id="445932"/>
    <lineage>
        <taxon>Bacteria</taxon>
        <taxon>Pseudomonadati</taxon>
        <taxon>Elusimicrobiota</taxon>
        <taxon>Elusimicrobia</taxon>
        <taxon>Elusimicrobiales</taxon>
        <taxon>Elusimicrobiaceae</taxon>
        <taxon>Elusimicrobium</taxon>
    </lineage>
</organism>
<proteinExistence type="inferred from homology"/>
<name>FLUC_ELUMP</name>
<dbReference type="EMBL" id="CP001055">
    <property type="protein sequence ID" value="ACC98401.1"/>
    <property type="molecule type" value="Genomic_DNA"/>
</dbReference>
<dbReference type="RefSeq" id="WP_012415016.1">
    <property type="nucleotide sequence ID" value="NC_010644.1"/>
</dbReference>
<dbReference type="SMR" id="B2KD05"/>
<dbReference type="STRING" id="445932.Emin_0846"/>
<dbReference type="KEGG" id="emi:Emin_0846"/>
<dbReference type="HOGENOM" id="CLU_114342_3_0_0"/>
<dbReference type="OrthoDB" id="9799631at2"/>
<dbReference type="Proteomes" id="UP000001029">
    <property type="component" value="Chromosome"/>
</dbReference>
<dbReference type="GO" id="GO:0005886">
    <property type="term" value="C:plasma membrane"/>
    <property type="evidence" value="ECO:0007669"/>
    <property type="project" value="UniProtKB-SubCell"/>
</dbReference>
<dbReference type="GO" id="GO:0062054">
    <property type="term" value="F:fluoride channel activity"/>
    <property type="evidence" value="ECO:0007669"/>
    <property type="project" value="UniProtKB-UniRule"/>
</dbReference>
<dbReference type="GO" id="GO:0046872">
    <property type="term" value="F:metal ion binding"/>
    <property type="evidence" value="ECO:0007669"/>
    <property type="project" value="UniProtKB-KW"/>
</dbReference>
<dbReference type="GO" id="GO:0140114">
    <property type="term" value="P:cellular detoxification of fluoride"/>
    <property type="evidence" value="ECO:0007669"/>
    <property type="project" value="UniProtKB-UniRule"/>
</dbReference>
<dbReference type="HAMAP" id="MF_00454">
    <property type="entry name" value="FluC"/>
    <property type="match status" value="1"/>
</dbReference>
<dbReference type="InterPro" id="IPR003691">
    <property type="entry name" value="FluC"/>
</dbReference>
<dbReference type="NCBIfam" id="TIGR00494">
    <property type="entry name" value="crcB"/>
    <property type="match status" value="1"/>
</dbReference>
<dbReference type="PANTHER" id="PTHR28259">
    <property type="entry name" value="FLUORIDE EXPORT PROTEIN 1-RELATED"/>
    <property type="match status" value="1"/>
</dbReference>
<dbReference type="PANTHER" id="PTHR28259:SF1">
    <property type="entry name" value="FLUORIDE EXPORT PROTEIN 1-RELATED"/>
    <property type="match status" value="1"/>
</dbReference>
<dbReference type="Pfam" id="PF02537">
    <property type="entry name" value="CRCB"/>
    <property type="match status" value="1"/>
</dbReference>
<accession>B2KD05</accession>
<reference key="1">
    <citation type="journal article" date="2009" name="Appl. Environ. Microbiol.">
        <title>Genomic analysis of 'Elusimicrobium minutum,' the first cultivated representative of the phylum 'Elusimicrobia' (formerly termite group 1).</title>
        <authorList>
            <person name="Herlemann D.P.R."/>
            <person name="Geissinger O."/>
            <person name="Ikeda-Ohtsubo W."/>
            <person name="Kunin V."/>
            <person name="Sun H."/>
            <person name="Lapidus A."/>
            <person name="Hugenholtz P."/>
            <person name="Brune A."/>
        </authorList>
    </citation>
    <scope>NUCLEOTIDE SEQUENCE [LARGE SCALE GENOMIC DNA]</scope>
    <source>
        <strain>Pei191</strain>
    </source>
</reference>
<keyword id="KW-0997">Cell inner membrane</keyword>
<keyword id="KW-1003">Cell membrane</keyword>
<keyword id="KW-0407">Ion channel</keyword>
<keyword id="KW-0406">Ion transport</keyword>
<keyword id="KW-0472">Membrane</keyword>
<keyword id="KW-0479">Metal-binding</keyword>
<keyword id="KW-1185">Reference proteome</keyword>
<keyword id="KW-0915">Sodium</keyword>
<keyword id="KW-0812">Transmembrane</keyword>
<keyword id="KW-1133">Transmembrane helix</keyword>
<keyword id="KW-0813">Transport</keyword>
<gene>
    <name evidence="1" type="primary">fluC</name>
    <name evidence="1" type="synonym">crcB</name>
    <name type="ordered locus">Emin_0846</name>
</gene>
<protein>
    <recommendedName>
        <fullName evidence="1">Fluoride-specific ion channel FluC</fullName>
    </recommendedName>
</protein>
<comment type="function">
    <text evidence="1">Fluoride-specific ion channel. Important for reducing fluoride concentration in the cell, thus reducing its toxicity.</text>
</comment>
<comment type="catalytic activity">
    <reaction evidence="1">
        <text>fluoride(in) = fluoride(out)</text>
        <dbReference type="Rhea" id="RHEA:76159"/>
        <dbReference type="ChEBI" id="CHEBI:17051"/>
    </reaction>
    <physiologicalReaction direction="left-to-right" evidence="1">
        <dbReference type="Rhea" id="RHEA:76160"/>
    </physiologicalReaction>
</comment>
<comment type="activity regulation">
    <text evidence="1">Na(+) is not transported, but it plays an essential structural role and its presence is essential for fluoride channel function.</text>
</comment>
<comment type="subcellular location">
    <subcellularLocation>
        <location evidence="1">Cell inner membrane</location>
        <topology evidence="1">Multi-pass membrane protein</topology>
    </subcellularLocation>
</comment>
<comment type="similarity">
    <text evidence="1">Belongs to the fluoride channel Fluc/FEX (TC 1.A.43) family.</text>
</comment>
<evidence type="ECO:0000255" key="1">
    <source>
        <dbReference type="HAMAP-Rule" id="MF_00454"/>
    </source>
</evidence>
<feature type="chain" id="PRO_1000125128" description="Fluoride-specific ion channel FluC">
    <location>
        <begin position="1"/>
        <end position="125"/>
    </location>
</feature>
<feature type="transmembrane region" description="Helical" evidence="1">
    <location>
        <begin position="7"/>
        <end position="27"/>
    </location>
</feature>
<feature type="transmembrane region" description="Helical" evidence="1">
    <location>
        <begin position="36"/>
        <end position="56"/>
    </location>
</feature>
<feature type="transmembrane region" description="Helical" evidence="1">
    <location>
        <begin position="63"/>
        <end position="83"/>
    </location>
</feature>
<feature type="transmembrane region" description="Helical" evidence="1">
    <location>
        <begin position="96"/>
        <end position="116"/>
    </location>
</feature>
<feature type="binding site" evidence="1">
    <location>
        <position position="75"/>
    </location>
    <ligand>
        <name>Na(+)</name>
        <dbReference type="ChEBI" id="CHEBI:29101"/>
        <note>structural</note>
    </ligand>
</feature>
<feature type="binding site" evidence="1">
    <location>
        <position position="78"/>
    </location>
    <ligand>
        <name>Na(+)</name>
        <dbReference type="ChEBI" id="CHEBI:29101"/>
        <note>structural</note>
    </ligand>
</feature>